<sequence length="293" mass="32006">MPELPEVETVRRGLQPFMEGATVVRVEQNRPDLRFAFPENFAERLSGRRIEALGRRAKYLTVHLDDGLSIISHLGMSGSFRIEAEDAQGLPGGFHHERSKNSLHDHVVFHLMRPDGASARIIYNDPRRFGFMLFAEKGALEEHPLLKDLGVEPTGNLLSGEVLAALFKGRRTPLKAALLDQRLIAGLGNIYVCEALWRPGLSPMRAAGSVAGEMDVMERLAGAIRSVIAQAIAAGGSSLKDYIQADGALGYFQHSFSVYGREGKPCRNPACGGTVERVVQSGRSTFFCASCQT</sequence>
<keyword id="KW-0227">DNA damage</keyword>
<keyword id="KW-0234">DNA repair</keyword>
<keyword id="KW-0238">DNA-binding</keyword>
<keyword id="KW-0326">Glycosidase</keyword>
<keyword id="KW-0378">Hydrolase</keyword>
<keyword id="KW-0456">Lyase</keyword>
<keyword id="KW-0479">Metal-binding</keyword>
<keyword id="KW-0511">Multifunctional enzyme</keyword>
<keyword id="KW-0862">Zinc</keyword>
<keyword id="KW-0863">Zinc-finger</keyword>
<accession>Q8YED2</accession>
<gene>
    <name evidence="2" type="primary">mutM</name>
    <name evidence="2" type="synonym">fpg</name>
    <name type="ordered locus">BMEI1946</name>
</gene>
<reference key="1">
    <citation type="journal article" date="2002" name="Proc. Natl. Acad. Sci. U.S.A.">
        <title>The genome sequence of the facultative intracellular pathogen Brucella melitensis.</title>
        <authorList>
            <person name="DelVecchio V.G."/>
            <person name="Kapatral V."/>
            <person name="Redkar R.J."/>
            <person name="Patra G."/>
            <person name="Mujer C."/>
            <person name="Los T."/>
            <person name="Ivanova N."/>
            <person name="Anderson I."/>
            <person name="Bhattacharyya A."/>
            <person name="Lykidis A."/>
            <person name="Reznik G."/>
            <person name="Jablonski L."/>
            <person name="Larsen N."/>
            <person name="D'Souza M."/>
            <person name="Bernal A."/>
            <person name="Mazur M."/>
            <person name="Goltsman E."/>
            <person name="Selkov E."/>
            <person name="Elzer P.H."/>
            <person name="Hagius S."/>
            <person name="O'Callaghan D."/>
            <person name="Letesson J.-J."/>
            <person name="Haselkorn R."/>
            <person name="Kyrpides N.C."/>
            <person name="Overbeek R."/>
        </authorList>
    </citation>
    <scope>NUCLEOTIDE SEQUENCE [LARGE SCALE GENOMIC DNA]</scope>
    <source>
        <strain>ATCC 23456 / CCUG 17765 / NCTC 10094 / 16M</strain>
    </source>
</reference>
<organism>
    <name type="scientific">Brucella melitensis biotype 1 (strain ATCC 23456 / CCUG 17765 / NCTC 10094 / 16M)</name>
    <dbReference type="NCBI Taxonomy" id="224914"/>
    <lineage>
        <taxon>Bacteria</taxon>
        <taxon>Pseudomonadati</taxon>
        <taxon>Pseudomonadota</taxon>
        <taxon>Alphaproteobacteria</taxon>
        <taxon>Hyphomicrobiales</taxon>
        <taxon>Brucellaceae</taxon>
        <taxon>Brucella/Ochrobactrum group</taxon>
        <taxon>Brucella</taxon>
    </lineage>
</organism>
<name>FPG_BRUME</name>
<evidence type="ECO:0000250" key="1"/>
<evidence type="ECO:0000255" key="2">
    <source>
        <dbReference type="HAMAP-Rule" id="MF_00103"/>
    </source>
</evidence>
<comment type="function">
    <text evidence="2">Involved in base excision repair of DNA damaged by oxidation or by mutagenic agents. Acts as a DNA glycosylase that recognizes and removes damaged bases. Has a preference for oxidized purines, such as 7,8-dihydro-8-oxoguanine (8-oxoG). Has AP (apurinic/apyrimidinic) lyase activity and introduces nicks in the DNA strand. Cleaves the DNA backbone by beta-delta elimination to generate a single-strand break at the site of the removed base with both 3'- and 5'-phosphates.</text>
</comment>
<comment type="catalytic activity">
    <reaction evidence="2">
        <text>Hydrolysis of DNA containing ring-opened 7-methylguanine residues, releasing 2,6-diamino-4-hydroxy-5-(N-methyl)formamidopyrimidine.</text>
        <dbReference type="EC" id="3.2.2.23"/>
    </reaction>
</comment>
<comment type="catalytic activity">
    <reaction evidence="2">
        <text>2'-deoxyribonucleotide-(2'-deoxyribose 5'-phosphate)-2'-deoxyribonucleotide-DNA = a 3'-end 2'-deoxyribonucleotide-(2,3-dehydro-2,3-deoxyribose 5'-phosphate)-DNA + a 5'-end 5'-phospho-2'-deoxyribonucleoside-DNA + H(+)</text>
        <dbReference type="Rhea" id="RHEA:66592"/>
        <dbReference type="Rhea" id="RHEA-COMP:13180"/>
        <dbReference type="Rhea" id="RHEA-COMP:16897"/>
        <dbReference type="Rhea" id="RHEA-COMP:17067"/>
        <dbReference type="ChEBI" id="CHEBI:15378"/>
        <dbReference type="ChEBI" id="CHEBI:136412"/>
        <dbReference type="ChEBI" id="CHEBI:157695"/>
        <dbReference type="ChEBI" id="CHEBI:167181"/>
        <dbReference type="EC" id="4.2.99.18"/>
    </reaction>
</comment>
<comment type="cofactor">
    <cofactor evidence="2">
        <name>Zn(2+)</name>
        <dbReference type="ChEBI" id="CHEBI:29105"/>
    </cofactor>
    <text evidence="2">Binds 1 zinc ion per subunit.</text>
</comment>
<comment type="subunit">
    <text evidence="2">Monomer.</text>
</comment>
<comment type="similarity">
    <text evidence="2">Belongs to the FPG family.</text>
</comment>
<proteinExistence type="inferred from homology"/>
<dbReference type="EC" id="3.2.2.23" evidence="2"/>
<dbReference type="EC" id="4.2.99.18" evidence="2"/>
<dbReference type="EMBL" id="AE008917">
    <property type="protein sequence ID" value="AAL53127.1"/>
    <property type="molecule type" value="Genomic_DNA"/>
</dbReference>
<dbReference type="PIR" id="AD3495">
    <property type="entry name" value="AD3495"/>
</dbReference>
<dbReference type="RefSeq" id="WP_002965245.1">
    <property type="nucleotide sequence ID" value="NZ_GG703778.1"/>
</dbReference>
<dbReference type="SMR" id="Q8YED2"/>
<dbReference type="GeneID" id="93017516"/>
<dbReference type="KEGG" id="bme:BMEI1946"/>
<dbReference type="KEGG" id="bmel:DK63_1545"/>
<dbReference type="PATRIC" id="fig|224914.52.peg.1631"/>
<dbReference type="eggNOG" id="COG0266">
    <property type="taxonomic scope" value="Bacteria"/>
</dbReference>
<dbReference type="PhylomeDB" id="Q8YED2"/>
<dbReference type="Proteomes" id="UP000000419">
    <property type="component" value="Chromosome I"/>
</dbReference>
<dbReference type="GO" id="GO:0034039">
    <property type="term" value="F:8-oxo-7,8-dihydroguanine DNA N-glycosylase activity"/>
    <property type="evidence" value="ECO:0007669"/>
    <property type="project" value="TreeGrafter"/>
</dbReference>
<dbReference type="GO" id="GO:0140078">
    <property type="term" value="F:class I DNA-(apurinic or apyrimidinic site) endonuclease activity"/>
    <property type="evidence" value="ECO:0007669"/>
    <property type="project" value="UniProtKB-EC"/>
</dbReference>
<dbReference type="GO" id="GO:0003684">
    <property type="term" value="F:damaged DNA binding"/>
    <property type="evidence" value="ECO:0007669"/>
    <property type="project" value="InterPro"/>
</dbReference>
<dbReference type="GO" id="GO:0008270">
    <property type="term" value="F:zinc ion binding"/>
    <property type="evidence" value="ECO:0007669"/>
    <property type="project" value="UniProtKB-UniRule"/>
</dbReference>
<dbReference type="GO" id="GO:0006284">
    <property type="term" value="P:base-excision repair"/>
    <property type="evidence" value="ECO:0007669"/>
    <property type="project" value="InterPro"/>
</dbReference>
<dbReference type="CDD" id="cd08966">
    <property type="entry name" value="EcFpg-like_N"/>
    <property type="match status" value="1"/>
</dbReference>
<dbReference type="FunFam" id="1.10.8.50:FF:000003">
    <property type="entry name" value="Formamidopyrimidine-DNA glycosylase"/>
    <property type="match status" value="1"/>
</dbReference>
<dbReference type="Gene3D" id="1.10.8.50">
    <property type="match status" value="1"/>
</dbReference>
<dbReference type="Gene3D" id="3.20.190.10">
    <property type="entry name" value="MutM-like, N-terminal"/>
    <property type="match status" value="1"/>
</dbReference>
<dbReference type="HAMAP" id="MF_00103">
    <property type="entry name" value="Fapy_DNA_glycosyl"/>
    <property type="match status" value="1"/>
</dbReference>
<dbReference type="InterPro" id="IPR015886">
    <property type="entry name" value="DNA_glyclase/AP_lyase_DNA-bd"/>
</dbReference>
<dbReference type="InterPro" id="IPR015887">
    <property type="entry name" value="DNA_glyclase_Znf_dom_DNA_BS"/>
</dbReference>
<dbReference type="InterPro" id="IPR020629">
    <property type="entry name" value="Formamido-pyr_DNA_Glyclase"/>
</dbReference>
<dbReference type="InterPro" id="IPR012319">
    <property type="entry name" value="FPG_cat"/>
</dbReference>
<dbReference type="InterPro" id="IPR035937">
    <property type="entry name" value="MutM-like_N-ter"/>
</dbReference>
<dbReference type="InterPro" id="IPR010979">
    <property type="entry name" value="Ribosomal_uS13-like_H2TH"/>
</dbReference>
<dbReference type="InterPro" id="IPR000214">
    <property type="entry name" value="Znf_DNA_glyclase/AP_lyase"/>
</dbReference>
<dbReference type="InterPro" id="IPR010663">
    <property type="entry name" value="Znf_FPG/IleRS"/>
</dbReference>
<dbReference type="NCBIfam" id="TIGR00577">
    <property type="entry name" value="fpg"/>
    <property type="match status" value="1"/>
</dbReference>
<dbReference type="NCBIfam" id="NF002211">
    <property type="entry name" value="PRK01103.1"/>
    <property type="match status" value="1"/>
</dbReference>
<dbReference type="PANTHER" id="PTHR22993">
    <property type="entry name" value="FORMAMIDOPYRIMIDINE-DNA GLYCOSYLASE"/>
    <property type="match status" value="1"/>
</dbReference>
<dbReference type="PANTHER" id="PTHR22993:SF9">
    <property type="entry name" value="FORMAMIDOPYRIMIDINE-DNA GLYCOSYLASE"/>
    <property type="match status" value="1"/>
</dbReference>
<dbReference type="Pfam" id="PF01149">
    <property type="entry name" value="Fapy_DNA_glyco"/>
    <property type="match status" value="1"/>
</dbReference>
<dbReference type="Pfam" id="PF06831">
    <property type="entry name" value="H2TH"/>
    <property type="match status" value="1"/>
</dbReference>
<dbReference type="Pfam" id="PF06827">
    <property type="entry name" value="zf-FPG_IleRS"/>
    <property type="match status" value="1"/>
</dbReference>
<dbReference type="SMART" id="SM00898">
    <property type="entry name" value="Fapy_DNA_glyco"/>
    <property type="match status" value="1"/>
</dbReference>
<dbReference type="SMART" id="SM01232">
    <property type="entry name" value="H2TH"/>
    <property type="match status" value="1"/>
</dbReference>
<dbReference type="SUPFAM" id="SSF57716">
    <property type="entry name" value="Glucocorticoid receptor-like (DNA-binding domain)"/>
    <property type="match status" value="1"/>
</dbReference>
<dbReference type="SUPFAM" id="SSF81624">
    <property type="entry name" value="N-terminal domain of MutM-like DNA repair proteins"/>
    <property type="match status" value="1"/>
</dbReference>
<dbReference type="SUPFAM" id="SSF46946">
    <property type="entry name" value="S13-like H2TH domain"/>
    <property type="match status" value="1"/>
</dbReference>
<dbReference type="PROSITE" id="PS51068">
    <property type="entry name" value="FPG_CAT"/>
    <property type="match status" value="1"/>
</dbReference>
<dbReference type="PROSITE" id="PS01242">
    <property type="entry name" value="ZF_FPG_1"/>
    <property type="match status" value="1"/>
</dbReference>
<dbReference type="PROSITE" id="PS51066">
    <property type="entry name" value="ZF_FPG_2"/>
    <property type="match status" value="1"/>
</dbReference>
<protein>
    <recommendedName>
        <fullName evidence="2">Formamidopyrimidine-DNA glycosylase</fullName>
        <shortName evidence="2">Fapy-DNA glycosylase</shortName>
        <ecNumber evidence="2">3.2.2.23</ecNumber>
    </recommendedName>
    <alternativeName>
        <fullName evidence="2">DNA-(apurinic or apyrimidinic site) lyase MutM</fullName>
        <shortName evidence="2">AP lyase MutM</shortName>
        <ecNumber evidence="2">4.2.99.18</ecNumber>
    </alternativeName>
</protein>
<feature type="initiator methionine" description="Removed" evidence="1">
    <location>
        <position position="1"/>
    </location>
</feature>
<feature type="chain" id="PRO_0000170815" description="Formamidopyrimidine-DNA glycosylase">
    <location>
        <begin position="2"/>
        <end position="293"/>
    </location>
</feature>
<feature type="zinc finger region" description="FPG-type" evidence="2">
    <location>
        <begin position="257"/>
        <end position="293"/>
    </location>
</feature>
<feature type="active site" description="Schiff-base intermediate with DNA" evidence="2">
    <location>
        <position position="2"/>
    </location>
</feature>
<feature type="active site" description="Proton donor" evidence="2">
    <location>
        <position position="3"/>
    </location>
</feature>
<feature type="active site" description="Proton donor; for beta-elimination activity" evidence="2">
    <location>
        <position position="58"/>
    </location>
</feature>
<feature type="active site" description="Proton donor; for delta-elimination activity" evidence="2">
    <location>
        <position position="283"/>
    </location>
</feature>
<feature type="binding site" evidence="2">
    <location>
        <position position="104"/>
    </location>
    <ligand>
        <name>DNA</name>
        <dbReference type="ChEBI" id="CHEBI:16991"/>
    </ligand>
</feature>
<feature type="binding site" evidence="2">
    <location>
        <position position="127"/>
    </location>
    <ligand>
        <name>DNA</name>
        <dbReference type="ChEBI" id="CHEBI:16991"/>
    </ligand>
</feature>
<feature type="binding site" evidence="2">
    <location>
        <position position="170"/>
    </location>
    <ligand>
        <name>DNA</name>
        <dbReference type="ChEBI" id="CHEBI:16991"/>
    </ligand>
</feature>